<gene>
    <name type="primary">CAPN2</name>
</gene>
<evidence type="ECO:0000250" key="1"/>
<evidence type="ECO:0000250" key="2">
    <source>
        <dbReference type="UniProtKB" id="O08529"/>
    </source>
</evidence>
<evidence type="ECO:0000250" key="3">
    <source>
        <dbReference type="UniProtKB" id="P17655"/>
    </source>
</evidence>
<evidence type="ECO:0000250" key="4">
    <source>
        <dbReference type="UniProtKB" id="Q07009"/>
    </source>
</evidence>
<evidence type="ECO:0000255" key="5"/>
<evidence type="ECO:0000255" key="6">
    <source>
        <dbReference type="PROSITE-ProRule" id="PRU00239"/>
    </source>
</evidence>
<evidence type="ECO:0000255" key="7">
    <source>
        <dbReference type="PROSITE-ProRule" id="PRU00448"/>
    </source>
</evidence>
<evidence type="ECO:0000305" key="8"/>
<keyword id="KW-0007">Acetylation</keyword>
<keyword id="KW-0106">Calcium</keyword>
<keyword id="KW-1003">Cell membrane</keyword>
<keyword id="KW-0963">Cytoplasm</keyword>
<keyword id="KW-0378">Hydrolase</keyword>
<keyword id="KW-0472">Membrane</keyword>
<keyword id="KW-0479">Metal-binding</keyword>
<keyword id="KW-0645">Protease</keyword>
<keyword id="KW-1185">Reference proteome</keyword>
<keyword id="KW-0677">Repeat</keyword>
<keyword id="KW-0788">Thiol protease</keyword>
<reference key="1">
    <citation type="submission" date="2007-03" db="EMBL/GenBank/DDBJ databases">
        <authorList>
            <consortium name="NIH - Mammalian Gene Collection (MGC) project"/>
        </authorList>
    </citation>
    <scope>NUCLEOTIDE SEQUENCE [LARGE SCALE MRNA]</scope>
    <source>
        <strain>Hereford</strain>
        <tissue>Ascending colon</tissue>
    </source>
</reference>
<reference key="2">
    <citation type="submission" date="1994-04" db="EMBL/GenBank/DDBJ databases">
        <title>Cloning the partial cDNA's for the calpain family of protease genes from bovine muscle.</title>
        <authorList>
            <person name="Sun W."/>
            <person name="Bidwell C.A."/>
            <person name="Ji S."/>
            <person name="Hancock D.L."/>
        </authorList>
    </citation>
    <scope>NUCLEOTIDE SEQUENCE [MRNA] OF 377-585</scope>
    <source>
        <tissue>Skeletal muscle</tissue>
    </source>
</reference>
<sequence length="700" mass="79935">MAGIAAKLAKDREAAEGLGSHERAVKYLNQDYAALRDECLEAGALFQDPSFPALPSSLGFKELGPYSSKTRGIEWKRPTEICDNPQFITGGATRTDICQGALGDCWLLAAIASLTLNEEILARVVPLDQSFQENYAGIFHFQFWQYGEWVEVVVDDRLPTKDGELLFVHSAEGSEFWSALLEKAYAKINGCYEALSGGATTEGFEDFTGGIAEWYELRKAPPNLFRIIQKALQKGSLLGCSIDITSAADSEAITFQKLVKGHAYSVTGAEEVESRGSLQKLIRIRNPWGEVEWTGQWNDNCPNWNTVDPEVRETLTRQHEDGEFWMSFNDFLRHYSRLEICNLTPDTLTSDSYKKWKLTKMDGNWRRGSTAGGCRNYPNTFWMNPQYLIKLEEEDEDQEDGESGCTFLVGLIQKHRRRQRKMGEDMHTIGFGIYEVPEELTGQTNIHLSKKFFLTTRARERSDTFINLREVLNRFKLPPGEYIVVPSTFEPNKDGDFCIRVFSEKKADYQVVDDEIEANIDEIDISEDDIDDGFRRLFAQLAGEDAEISAFELQTILRRVLAKRQDIKSDGFSIETCKIMVDMLDSDGSGKLGLKEFYILWTKIQKYQKIYREIDVDRSGTMNSYEMRKALEEAGFKMPCQLHQVIVARFADDDLIIDFDNFVRCLIRLETLFRIFKQLDPENTGMIQLDLISWLSFSVL</sequence>
<name>CAN2_BOVIN</name>
<organism>
    <name type="scientific">Bos taurus</name>
    <name type="common">Bovine</name>
    <dbReference type="NCBI Taxonomy" id="9913"/>
    <lineage>
        <taxon>Eukaryota</taxon>
        <taxon>Metazoa</taxon>
        <taxon>Chordata</taxon>
        <taxon>Craniata</taxon>
        <taxon>Vertebrata</taxon>
        <taxon>Euteleostomi</taxon>
        <taxon>Mammalia</taxon>
        <taxon>Eutheria</taxon>
        <taxon>Laurasiatheria</taxon>
        <taxon>Artiodactyla</taxon>
        <taxon>Ruminantia</taxon>
        <taxon>Pecora</taxon>
        <taxon>Bovidae</taxon>
        <taxon>Bovinae</taxon>
        <taxon>Bos</taxon>
    </lineage>
</organism>
<feature type="initiator methionine" description="Removed" evidence="3">
    <location>
        <position position="1"/>
    </location>
</feature>
<feature type="propeptide" id="PRO_0000317423" description="Anchors to the small subunit" evidence="5">
    <location>
        <begin position="2"/>
        <end position="19"/>
    </location>
</feature>
<feature type="chain" id="PRO_0000207702" description="Calpain-2 catalytic subunit">
    <location>
        <begin position="20"/>
        <end position="700"/>
    </location>
</feature>
<feature type="domain" description="Calpain catalytic" evidence="6">
    <location>
        <begin position="45"/>
        <end position="344"/>
    </location>
</feature>
<feature type="domain" description="EF-hand 1" evidence="7">
    <location>
        <begin position="572"/>
        <end position="597"/>
    </location>
</feature>
<feature type="domain" description="EF-hand 2" evidence="7">
    <location>
        <begin position="602"/>
        <end position="637"/>
    </location>
</feature>
<feature type="domain" description="EF-hand 3" evidence="7">
    <location>
        <begin position="652"/>
        <end position="672"/>
    </location>
</feature>
<feature type="region of interest" description="Domain III" evidence="1">
    <location>
        <begin position="345"/>
        <end position="514"/>
    </location>
</feature>
<feature type="region of interest" description="Linker" evidence="1">
    <location>
        <begin position="515"/>
        <end position="529"/>
    </location>
</feature>
<feature type="region of interest" description="Domain IV" evidence="1">
    <location>
        <begin position="530"/>
        <end position="700"/>
    </location>
</feature>
<feature type="active site" evidence="1">
    <location>
        <position position="105"/>
    </location>
</feature>
<feature type="active site" evidence="1">
    <location>
        <position position="262"/>
    </location>
</feature>
<feature type="active site" evidence="1">
    <location>
        <position position="286"/>
    </location>
</feature>
<feature type="binding site" evidence="1">
    <location>
        <position position="91"/>
    </location>
    <ligand>
        <name>Ca(2+)</name>
        <dbReference type="ChEBI" id="CHEBI:29108"/>
        <label>3</label>
    </ligand>
</feature>
<feature type="binding site" evidence="1">
    <location>
        <position position="96"/>
    </location>
    <ligand>
        <name>Ca(2+)</name>
        <dbReference type="ChEBI" id="CHEBI:29108"/>
        <label>3</label>
    </ligand>
</feature>
<feature type="binding site" evidence="1">
    <location>
        <position position="175"/>
    </location>
    <ligand>
        <name>Ca(2+)</name>
        <dbReference type="ChEBI" id="CHEBI:29108"/>
        <label>3</label>
    </ligand>
</feature>
<feature type="binding site" evidence="1">
    <location>
        <position position="229"/>
    </location>
    <ligand>
        <name>Ca(2+)</name>
        <dbReference type="ChEBI" id="CHEBI:29108"/>
        <label>2</label>
    </ligand>
</feature>
<feature type="binding site" evidence="1">
    <location>
        <position position="230"/>
    </location>
    <ligand>
        <name>Ca(2+)</name>
        <dbReference type="ChEBI" id="CHEBI:29108"/>
        <label>2</label>
    </ligand>
</feature>
<feature type="binding site" evidence="1">
    <location>
        <position position="292"/>
    </location>
    <ligand>
        <name>Ca(2+)</name>
        <dbReference type="ChEBI" id="CHEBI:29108"/>
        <label>4</label>
    </ligand>
</feature>
<feature type="binding site" evidence="1">
    <location>
        <position position="299"/>
    </location>
    <ligand>
        <name>Ca(2+)</name>
        <dbReference type="ChEBI" id="CHEBI:29108"/>
        <label>4</label>
    </ligand>
</feature>
<feature type="binding site" evidence="1">
    <location>
        <position position="323"/>
    </location>
    <ligand>
        <name>Ca(2+)</name>
        <dbReference type="ChEBI" id="CHEBI:29108"/>
        <label>4</label>
    </ligand>
</feature>
<feature type="binding site" evidence="1">
    <location>
        <position position="542"/>
    </location>
    <ligand>
        <name>Ca(2+)</name>
        <dbReference type="ChEBI" id="CHEBI:29108"/>
        <label>5</label>
    </ligand>
</feature>
<feature type="binding site" evidence="1">
    <location>
        <position position="545"/>
    </location>
    <ligand>
        <name>Ca(2+)</name>
        <dbReference type="ChEBI" id="CHEBI:29108"/>
        <label>5</label>
    </ligand>
</feature>
<feature type="binding site" evidence="1">
    <location>
        <position position="547"/>
    </location>
    <ligand>
        <name>Ca(2+)</name>
        <dbReference type="ChEBI" id="CHEBI:29108"/>
        <label>5</label>
    </ligand>
</feature>
<feature type="binding site" evidence="1">
    <location>
        <position position="552"/>
    </location>
    <ligand>
        <name>Ca(2+)</name>
        <dbReference type="ChEBI" id="CHEBI:29108"/>
        <label>5</label>
    </ligand>
</feature>
<feature type="binding site" evidence="7">
    <location>
        <position position="585"/>
    </location>
    <ligand>
        <name>Ca(2+)</name>
        <dbReference type="ChEBI" id="CHEBI:29108"/>
        <label>6</label>
    </ligand>
</feature>
<feature type="binding site" evidence="7">
    <location>
        <position position="587"/>
    </location>
    <ligand>
        <name>Ca(2+)</name>
        <dbReference type="ChEBI" id="CHEBI:29108"/>
        <label>6</label>
    </ligand>
</feature>
<feature type="binding site" evidence="7">
    <location>
        <position position="589"/>
    </location>
    <ligand>
        <name>Ca(2+)</name>
        <dbReference type="ChEBI" id="CHEBI:29108"/>
        <label>6</label>
    </ligand>
</feature>
<feature type="binding site" evidence="7">
    <location>
        <position position="591"/>
    </location>
    <ligand>
        <name>Ca(2+)</name>
        <dbReference type="ChEBI" id="CHEBI:29108"/>
        <label>6</label>
    </ligand>
</feature>
<feature type="binding site" evidence="7">
    <location>
        <position position="596"/>
    </location>
    <ligand>
        <name>Ca(2+)</name>
        <dbReference type="ChEBI" id="CHEBI:29108"/>
        <label>6</label>
    </ligand>
</feature>
<feature type="binding site" evidence="7">
    <location>
        <position position="615"/>
    </location>
    <ligand>
        <name>Ca(2+)</name>
        <dbReference type="ChEBI" id="CHEBI:29108"/>
        <label>7</label>
    </ligand>
</feature>
<feature type="binding site" evidence="7">
    <location>
        <position position="617"/>
    </location>
    <ligand>
        <name>Ca(2+)</name>
        <dbReference type="ChEBI" id="CHEBI:29108"/>
        <label>7</label>
    </ligand>
</feature>
<feature type="binding site" evidence="7">
    <location>
        <position position="619"/>
    </location>
    <ligand>
        <name>Ca(2+)</name>
        <dbReference type="ChEBI" id="CHEBI:29108"/>
        <label>7</label>
    </ligand>
</feature>
<feature type="binding site" evidence="7">
    <location>
        <position position="621"/>
    </location>
    <ligand>
        <name>Ca(2+)</name>
        <dbReference type="ChEBI" id="CHEBI:29108"/>
        <label>7</label>
    </ligand>
</feature>
<feature type="binding site" evidence="7">
    <location>
        <position position="626"/>
    </location>
    <ligand>
        <name>Ca(2+)</name>
        <dbReference type="ChEBI" id="CHEBI:29108"/>
        <label>7</label>
    </ligand>
</feature>
<feature type="binding site" evidence="1">
    <location>
        <position position="658"/>
    </location>
    <ligand>
        <name>Ca(2+)</name>
        <dbReference type="ChEBI" id="CHEBI:29108"/>
        <label>1</label>
    </ligand>
</feature>
<feature type="binding site" evidence="1">
    <location>
        <position position="661"/>
    </location>
    <ligand>
        <name>Ca(2+)</name>
        <dbReference type="ChEBI" id="CHEBI:29108"/>
        <label>1</label>
    </ligand>
</feature>
<feature type="modified residue" description="N-acetylalanine" evidence="3">
    <location>
        <position position="2"/>
    </location>
</feature>
<feature type="sequence conflict" description="In Ref. 2; AAA18455." evidence="8" ref="2">
    <original>R</original>
    <variation>Q</variation>
    <location>
        <position position="417"/>
    </location>
</feature>
<feature type="sequence conflict" description="In Ref. 2; AAA18455." evidence="8" ref="2">
    <original>ERS</original>
    <variation>DV</variation>
    <location>
        <begin position="460"/>
        <end position="462"/>
    </location>
</feature>
<comment type="function">
    <text evidence="2 3">Calcium-regulated non-lysosomal thiol-protease which catalyzes limited proteolysis of substrates involved in cytoskeletal remodeling and signal transduction. Proteolytically cleaves MYOC at 'Arg-226'. Proteolytically cleaves CPEB3 following neuronal stimulation which abolishes CPEB3 translational repressor activity, leading to translation of CPEB3 target mRNAs.</text>
</comment>
<comment type="catalytic activity">
    <reaction>
        <text>Broad endopeptidase specificity.</text>
        <dbReference type="EC" id="3.4.22.53"/>
    </reaction>
</comment>
<comment type="cofactor">
    <cofactor evidence="1">
        <name>Ca(2+)</name>
        <dbReference type="ChEBI" id="CHEBI:29108"/>
    </cofactor>
    <text evidence="1">Binds 7 Ca(2+) ions.</text>
</comment>
<comment type="activity regulation">
    <text>Activated by 200-1000 micromolar concentrations of calcium and inhibited by calpastatin.</text>
</comment>
<comment type="subunit">
    <text evidence="2 4">Forms a heterodimer with a small (regulatory) subunit (CAPNS1). Interacts with CPEB3; this leads to cleavage of CPEB3.</text>
</comment>
<comment type="subcellular location">
    <subcellularLocation>
        <location evidence="1">Cytoplasm</location>
    </subcellularLocation>
    <subcellularLocation>
        <location evidence="1">Cell membrane</location>
    </subcellularLocation>
    <text evidence="1">Translocates to the plasma membrane upon Ca(2+) binding.</text>
</comment>
<comment type="tissue specificity">
    <text>Ubiquitous.</text>
</comment>
<comment type="similarity">
    <text evidence="8">Belongs to the peptidase C2 family.</text>
</comment>
<comment type="sequence caution" evidence="8">
    <conflict type="frameshift">
        <sequence resource="EMBL-CDS" id="AAA18455"/>
    </conflict>
</comment>
<accession>Q27971</accession>
<accession>A4IFD3</accession>
<protein>
    <recommendedName>
        <fullName>Calpain-2 catalytic subunit</fullName>
        <ecNumber>3.4.22.53</ecNumber>
    </recommendedName>
    <alternativeName>
        <fullName>Calcium-activated neutral proteinase 2</fullName>
        <shortName>CANP 2</shortName>
    </alternativeName>
    <alternativeName>
        <fullName>Calpain M-type</fullName>
    </alternativeName>
    <alternativeName>
        <fullName>Calpain-2 large subunit</fullName>
    </alternativeName>
    <alternativeName>
        <fullName>Millimolar-calpain</fullName>
        <shortName>M-calpain</shortName>
    </alternativeName>
</protein>
<proteinExistence type="evidence at transcript level"/>
<dbReference type="EC" id="3.4.22.53"/>
<dbReference type="EMBL" id="BC134526">
    <property type="protein sequence ID" value="AAI34527.1"/>
    <property type="molecule type" value="mRNA"/>
</dbReference>
<dbReference type="EMBL" id="U07850">
    <property type="protein sequence ID" value="AAA18455.1"/>
    <property type="status" value="ALT_FRAME"/>
    <property type="molecule type" value="mRNA"/>
</dbReference>
<dbReference type="RefSeq" id="NP_001096556.1">
    <property type="nucleotide sequence ID" value="NM_001103086.1"/>
</dbReference>
<dbReference type="SMR" id="Q27971"/>
<dbReference type="CORUM" id="Q27971"/>
<dbReference type="FunCoup" id="Q27971">
    <property type="interactions" value="1356"/>
</dbReference>
<dbReference type="IntAct" id="Q27971">
    <property type="interactions" value="3"/>
</dbReference>
<dbReference type="MINT" id="Q27971"/>
<dbReference type="STRING" id="9913.ENSBTAP00000059970"/>
<dbReference type="BindingDB" id="Q27971"/>
<dbReference type="ChEMBL" id="CHEMBL3612"/>
<dbReference type="MEROPS" id="C02.002"/>
<dbReference type="PaxDb" id="9913-ENSBTAP00000044733"/>
<dbReference type="PeptideAtlas" id="Q27971"/>
<dbReference type="Ensembl" id="ENSBTAT00000047532.5">
    <property type="protein sequence ID" value="ENSBTAP00000044733.3"/>
    <property type="gene ID" value="ENSBTAG00000012778.7"/>
</dbReference>
<dbReference type="GeneID" id="281662"/>
<dbReference type="KEGG" id="bta:281662"/>
<dbReference type="CTD" id="824"/>
<dbReference type="VEuPathDB" id="HostDB:ENSBTAG00000012778"/>
<dbReference type="VGNC" id="VGNC:55037">
    <property type="gene designation" value="CAPN2"/>
</dbReference>
<dbReference type="eggNOG" id="KOG0045">
    <property type="taxonomic scope" value="Eukaryota"/>
</dbReference>
<dbReference type="GeneTree" id="ENSGT00940000154784"/>
<dbReference type="HOGENOM" id="CLU_010982_0_1_1"/>
<dbReference type="InParanoid" id="Q27971"/>
<dbReference type="OMA" id="YRDMDVD"/>
<dbReference type="OrthoDB" id="424753at2759"/>
<dbReference type="TreeFam" id="TF314748"/>
<dbReference type="Reactome" id="R-BTA-1474228">
    <property type="pathway name" value="Degradation of the extracellular matrix"/>
</dbReference>
<dbReference type="Reactome" id="R-BTA-9856530">
    <property type="pathway name" value="High laminar flow shear stress activates signaling by PIEZO1 and PECAM1:CDH5:KDR in endothelial cells"/>
</dbReference>
<dbReference type="Reactome" id="R-BTA-9860927">
    <property type="pathway name" value="Turbulent (oscillatory, disturbed) flow shear stress activates signaling by PIEZO1 and integrins in endothelial cells"/>
</dbReference>
<dbReference type="Proteomes" id="UP000009136">
    <property type="component" value="Chromosome 16"/>
</dbReference>
<dbReference type="Bgee" id="ENSBTAG00000012778">
    <property type="expression patterns" value="Expressed in myometrium and 105 other cell types or tissues"/>
</dbReference>
<dbReference type="GO" id="GO:0005737">
    <property type="term" value="C:cytoplasm"/>
    <property type="evidence" value="ECO:0000250"/>
    <property type="project" value="UniProtKB"/>
</dbReference>
<dbReference type="GO" id="GO:0030425">
    <property type="term" value="C:dendrite"/>
    <property type="evidence" value="ECO:0000250"/>
    <property type="project" value="UniProtKB"/>
</dbReference>
<dbReference type="GO" id="GO:0005886">
    <property type="term" value="C:plasma membrane"/>
    <property type="evidence" value="ECO:0007669"/>
    <property type="project" value="UniProtKB-SubCell"/>
</dbReference>
<dbReference type="GO" id="GO:0005509">
    <property type="term" value="F:calcium ion binding"/>
    <property type="evidence" value="ECO:0007669"/>
    <property type="project" value="InterPro"/>
</dbReference>
<dbReference type="GO" id="GO:0004198">
    <property type="term" value="F:calcium-dependent cysteine-type endopeptidase activity"/>
    <property type="evidence" value="ECO:0000250"/>
    <property type="project" value="UniProtKB"/>
</dbReference>
<dbReference type="GO" id="GO:0071230">
    <property type="term" value="P:cellular response to amino acid stimulus"/>
    <property type="evidence" value="ECO:0000250"/>
    <property type="project" value="UniProtKB"/>
</dbReference>
<dbReference type="GO" id="GO:0006508">
    <property type="term" value="P:proteolysis"/>
    <property type="evidence" value="ECO:0000250"/>
    <property type="project" value="UniProtKB"/>
</dbReference>
<dbReference type="CDD" id="cd00214">
    <property type="entry name" value="Calpain_III"/>
    <property type="match status" value="1"/>
</dbReference>
<dbReference type="CDD" id="cd00044">
    <property type="entry name" value="CysPc"/>
    <property type="match status" value="1"/>
</dbReference>
<dbReference type="CDD" id="cd16199">
    <property type="entry name" value="EFh_PEF_CAPN2"/>
    <property type="match status" value="1"/>
</dbReference>
<dbReference type="FunFam" id="2.60.120.380:FF:000001">
    <property type="entry name" value="Calpain-1 catalytic subunit"/>
    <property type="match status" value="1"/>
</dbReference>
<dbReference type="FunFam" id="3.90.70.10:FF:000001">
    <property type="entry name" value="Calpain-1 catalytic subunit"/>
    <property type="match status" value="1"/>
</dbReference>
<dbReference type="FunFam" id="1.10.238.10:FF:000099">
    <property type="entry name" value="calpain-2 catalytic subunit"/>
    <property type="match status" value="1"/>
</dbReference>
<dbReference type="Gene3D" id="2.60.120.380">
    <property type="match status" value="1"/>
</dbReference>
<dbReference type="Gene3D" id="3.90.70.10">
    <property type="entry name" value="Cysteine proteinases"/>
    <property type="match status" value="1"/>
</dbReference>
<dbReference type="Gene3D" id="1.10.238.10">
    <property type="entry name" value="EF-hand"/>
    <property type="match status" value="1"/>
</dbReference>
<dbReference type="InterPro" id="IPR033883">
    <property type="entry name" value="C2_III"/>
</dbReference>
<dbReference type="InterPro" id="IPR022684">
    <property type="entry name" value="Calpain_cysteine_protease"/>
</dbReference>
<dbReference type="InterPro" id="IPR022682">
    <property type="entry name" value="Calpain_domain_III"/>
</dbReference>
<dbReference type="InterPro" id="IPR022683">
    <property type="entry name" value="Calpain_III"/>
</dbReference>
<dbReference type="InterPro" id="IPR036213">
    <property type="entry name" value="Calpain_III_sf"/>
</dbReference>
<dbReference type="InterPro" id="IPR011992">
    <property type="entry name" value="EF-hand-dom_pair"/>
</dbReference>
<dbReference type="InterPro" id="IPR018247">
    <property type="entry name" value="EF_Hand_1_Ca_BS"/>
</dbReference>
<dbReference type="InterPro" id="IPR002048">
    <property type="entry name" value="EF_hand_dom"/>
</dbReference>
<dbReference type="InterPro" id="IPR042736">
    <property type="entry name" value="EFh_PEF_CAPN2"/>
</dbReference>
<dbReference type="InterPro" id="IPR038765">
    <property type="entry name" value="Papain-like_cys_pep_sf"/>
</dbReference>
<dbReference type="InterPro" id="IPR000169">
    <property type="entry name" value="Pept_cys_AS"/>
</dbReference>
<dbReference type="InterPro" id="IPR001300">
    <property type="entry name" value="Peptidase_C2_calpain_cat"/>
</dbReference>
<dbReference type="PANTHER" id="PTHR10183">
    <property type="entry name" value="CALPAIN"/>
    <property type="match status" value="1"/>
</dbReference>
<dbReference type="PANTHER" id="PTHR10183:SF268">
    <property type="entry name" value="CALPAIN-2 CATALYTIC SUBUNIT"/>
    <property type="match status" value="1"/>
</dbReference>
<dbReference type="Pfam" id="PF01067">
    <property type="entry name" value="Calpain_III"/>
    <property type="match status" value="1"/>
</dbReference>
<dbReference type="Pfam" id="PF13833">
    <property type="entry name" value="EF-hand_8"/>
    <property type="match status" value="1"/>
</dbReference>
<dbReference type="Pfam" id="PF00648">
    <property type="entry name" value="Peptidase_C2"/>
    <property type="match status" value="1"/>
</dbReference>
<dbReference type="PRINTS" id="PR00704">
    <property type="entry name" value="CALPAIN"/>
</dbReference>
<dbReference type="SMART" id="SM00720">
    <property type="entry name" value="calpain_III"/>
    <property type="match status" value="1"/>
</dbReference>
<dbReference type="SMART" id="SM00230">
    <property type="entry name" value="CysPc"/>
    <property type="match status" value="1"/>
</dbReference>
<dbReference type="SUPFAM" id="SSF49758">
    <property type="entry name" value="Calpain large subunit, middle domain (domain III)"/>
    <property type="match status" value="1"/>
</dbReference>
<dbReference type="SUPFAM" id="SSF54001">
    <property type="entry name" value="Cysteine proteinases"/>
    <property type="match status" value="1"/>
</dbReference>
<dbReference type="SUPFAM" id="SSF47473">
    <property type="entry name" value="EF-hand"/>
    <property type="match status" value="1"/>
</dbReference>
<dbReference type="PROSITE" id="PS50203">
    <property type="entry name" value="CALPAIN_CAT"/>
    <property type="match status" value="1"/>
</dbReference>
<dbReference type="PROSITE" id="PS00018">
    <property type="entry name" value="EF_HAND_1"/>
    <property type="match status" value="2"/>
</dbReference>
<dbReference type="PROSITE" id="PS50222">
    <property type="entry name" value="EF_HAND_2"/>
    <property type="match status" value="3"/>
</dbReference>
<dbReference type="PROSITE" id="PS00139">
    <property type="entry name" value="THIOL_PROTEASE_CYS"/>
    <property type="match status" value="1"/>
</dbReference>